<comment type="function">
    <text evidence="1">ATP-dependent RNA helicase which is a subunit of the eIF4F complex involved in cap recognition and is required for mRNA binding to ribosome. In the current model of translation initiation, eIF4A unwinds RNA secondary structures in the 5'-UTR of mRNAs which is necessary to allow efficient binding of the small ribosomal subunit, and subsequent scanning for the initiator codon.</text>
</comment>
<comment type="catalytic activity">
    <reaction evidence="1">
        <text>ATP + H2O = ADP + phosphate + H(+)</text>
        <dbReference type="Rhea" id="RHEA:13065"/>
        <dbReference type="ChEBI" id="CHEBI:15377"/>
        <dbReference type="ChEBI" id="CHEBI:15378"/>
        <dbReference type="ChEBI" id="CHEBI:30616"/>
        <dbReference type="ChEBI" id="CHEBI:43474"/>
        <dbReference type="ChEBI" id="CHEBI:456216"/>
        <dbReference type="EC" id="3.6.4.13"/>
    </reaction>
</comment>
<comment type="subunit">
    <text evidence="2 7 9">eIF4F is a multi-subunit complex, the composition of which varies with external and internal environmental conditions (By similarity). It is composed of at least EIF4A, EIF4E and EIF4G (By similarity). Interacts with CDKA-1 (PubMed:14706832). Interacts with MRF1, MRF2, MRF3/ECIP1 and MRF4 (PubMed:29084871).</text>
</comment>
<comment type="interaction">
    <interactant intactId="EBI-371706">
        <id>P41376</id>
    </interactant>
    <interactant intactId="EBI-371713">
        <id>P24100</id>
        <label>CDKA-1</label>
    </interactant>
    <organismsDiffer>false</organismsDiffer>
    <experiments>2</experiments>
</comment>
<comment type="subcellular location">
    <subcellularLocation>
        <location evidence="1">Cytoplasm</location>
    </subcellularLocation>
</comment>
<comment type="alternative products">
    <event type="alternative splicing"/>
    <isoform>
        <id>P41376-1</id>
        <name>1</name>
        <sequence type="displayed"/>
    </isoform>
    <text>A number of isoforms are produced. According to EST sequences.</text>
</comment>
<comment type="tissue specificity">
    <text evidence="8">Highly expressed in the whole plant.</text>
</comment>
<comment type="domain">
    <text evidence="1">The Q motif is unique to and characteristic of the DEAD box family of RNA helicases and controls ATP binding and hydrolysis.</text>
</comment>
<comment type="similarity">
    <text evidence="13">Belongs to the DEAD box helicase family. eIF4A subfamily.</text>
</comment>
<comment type="sequence caution" evidence="13">
    <conflict type="erroneous gene model prediction">
        <sequence resource="EMBL-CDS" id="CAC43286"/>
    </conflict>
</comment>
<evidence type="ECO:0000250" key="1">
    <source>
        <dbReference type="UniProtKB" id="P10081"/>
    </source>
</evidence>
<evidence type="ECO:0000250" key="2">
    <source>
        <dbReference type="UniProtKB" id="P60842"/>
    </source>
</evidence>
<evidence type="ECO:0000250" key="3">
    <source>
        <dbReference type="UniProtKB" id="Q94A52"/>
    </source>
</evidence>
<evidence type="ECO:0000250" key="4">
    <source>
        <dbReference type="UniProtKB" id="Q9CAI7"/>
    </source>
</evidence>
<evidence type="ECO:0000255" key="5">
    <source>
        <dbReference type="PROSITE-ProRule" id="PRU00541"/>
    </source>
</evidence>
<evidence type="ECO:0000255" key="6">
    <source>
        <dbReference type="PROSITE-ProRule" id="PRU00542"/>
    </source>
</evidence>
<evidence type="ECO:0000269" key="7">
    <source>
    </source>
</evidence>
<evidence type="ECO:0000269" key="8">
    <source>
    </source>
</evidence>
<evidence type="ECO:0000269" key="9">
    <source>
    </source>
</evidence>
<evidence type="ECO:0000303" key="10">
    <source>
    </source>
</evidence>
<evidence type="ECO:0000303" key="11">
    <source>
    </source>
</evidence>
<evidence type="ECO:0000303" key="12">
    <source ref="2"/>
</evidence>
<evidence type="ECO:0000305" key="13"/>
<evidence type="ECO:0000312" key="14">
    <source>
        <dbReference type="Araport" id="AT3G13920"/>
    </source>
</evidence>
<evidence type="ECO:0000312" key="15">
    <source>
        <dbReference type="EMBL" id="BAB02322.1"/>
    </source>
</evidence>
<evidence type="ECO:0007744" key="16">
    <source>
    </source>
</evidence>
<dbReference type="EC" id="3.6.4.13" evidence="1"/>
<dbReference type="EMBL" id="X65052">
    <property type="protein sequence ID" value="CAA46188.1"/>
    <property type="molecule type" value="mRNA"/>
</dbReference>
<dbReference type="EMBL" id="AJ298137">
    <property type="protein sequence ID" value="CAC43286.1"/>
    <property type="status" value="ALT_SEQ"/>
    <property type="molecule type" value="Genomic_DNA"/>
</dbReference>
<dbReference type="EMBL" id="AJ298138">
    <property type="protein sequence ID" value="CAC43288.1"/>
    <property type="molecule type" value="mRNA"/>
</dbReference>
<dbReference type="EMBL" id="AB019229">
    <property type="protein sequence ID" value="BAB02322.1"/>
    <property type="molecule type" value="Genomic_DNA"/>
</dbReference>
<dbReference type="EMBL" id="CP002686">
    <property type="protein sequence ID" value="AEE75438.1"/>
    <property type="molecule type" value="Genomic_DNA"/>
</dbReference>
<dbReference type="EMBL" id="AY050957">
    <property type="protein sequence ID" value="AAK93634.1"/>
    <property type="molecule type" value="mRNA"/>
</dbReference>
<dbReference type="EMBL" id="AY052344">
    <property type="protein sequence ID" value="AAK96536.1"/>
    <property type="molecule type" value="mRNA"/>
</dbReference>
<dbReference type="EMBL" id="AY081287">
    <property type="protein sequence ID" value="AAL91176.1"/>
    <property type="molecule type" value="mRNA"/>
</dbReference>
<dbReference type="EMBL" id="AY091304">
    <property type="protein sequence ID" value="AAM14243.1"/>
    <property type="molecule type" value="mRNA"/>
</dbReference>
<dbReference type="EMBL" id="AY098962">
    <property type="protein sequence ID" value="AAM19972.1"/>
    <property type="molecule type" value="mRNA"/>
</dbReference>
<dbReference type="EMBL" id="AY139981">
    <property type="protein sequence ID" value="AAM98124.1"/>
    <property type="molecule type" value="mRNA"/>
</dbReference>
<dbReference type="EMBL" id="BT000655">
    <property type="protein sequence ID" value="AAN31802.1"/>
    <property type="molecule type" value="mRNA"/>
</dbReference>
<dbReference type="EMBL" id="AK226414">
    <property type="protein sequence ID" value="BAE98559.1"/>
    <property type="molecule type" value="mRNA"/>
</dbReference>
<dbReference type="EMBL" id="AY086907">
    <property type="protein sequence ID" value="AAM63951.1"/>
    <property type="molecule type" value="mRNA"/>
</dbReference>
<dbReference type="PIR" id="JC1452">
    <property type="entry name" value="JC1452"/>
</dbReference>
<dbReference type="RefSeq" id="NP_566469.1">
    <molecule id="P41376-1"/>
    <property type="nucleotide sequence ID" value="NM_112246.4"/>
</dbReference>
<dbReference type="SMR" id="P41376"/>
<dbReference type="BioGRID" id="5939">
    <property type="interactions" value="15"/>
</dbReference>
<dbReference type="FunCoup" id="P41376">
    <property type="interactions" value="3944"/>
</dbReference>
<dbReference type="IntAct" id="P41376">
    <property type="interactions" value="3"/>
</dbReference>
<dbReference type="STRING" id="3702.P41376"/>
<dbReference type="iPTMnet" id="P41376"/>
<dbReference type="EnsemblPlants" id="AT3G13920.1">
    <molecule id="P41376-1"/>
    <property type="protein sequence ID" value="AT3G13920.1"/>
    <property type="gene ID" value="AT3G13920"/>
</dbReference>
<dbReference type="GeneID" id="820605"/>
<dbReference type="Gramene" id="AT3G13920.1">
    <molecule id="P41376-1"/>
    <property type="protein sequence ID" value="AT3G13920.1"/>
    <property type="gene ID" value="AT3G13920"/>
</dbReference>
<dbReference type="KEGG" id="ath:AT3G13920"/>
<dbReference type="Araport" id="AT3G13920"/>
<dbReference type="TAIR" id="AT3G13920">
    <property type="gene designation" value="EIF4A1"/>
</dbReference>
<dbReference type="InParanoid" id="P41376"/>
<dbReference type="PhylomeDB" id="P41376"/>
<dbReference type="CD-CODE" id="4299E36E">
    <property type="entry name" value="Nucleolus"/>
</dbReference>
<dbReference type="PRO" id="PR:P41376"/>
<dbReference type="Proteomes" id="UP000006548">
    <property type="component" value="Chromosome 3"/>
</dbReference>
<dbReference type="ExpressionAtlas" id="P41376">
    <property type="expression patterns" value="baseline and differential"/>
</dbReference>
<dbReference type="GO" id="GO:0005737">
    <property type="term" value="C:cytoplasm"/>
    <property type="evidence" value="ECO:0007669"/>
    <property type="project" value="UniProtKB-SubCell"/>
</dbReference>
<dbReference type="GO" id="GO:0005524">
    <property type="term" value="F:ATP binding"/>
    <property type="evidence" value="ECO:0007669"/>
    <property type="project" value="UniProtKB-KW"/>
</dbReference>
<dbReference type="GO" id="GO:0016887">
    <property type="term" value="F:ATP hydrolysis activity"/>
    <property type="evidence" value="ECO:0007669"/>
    <property type="project" value="RHEA"/>
</dbReference>
<dbReference type="GO" id="GO:0003723">
    <property type="term" value="F:RNA binding"/>
    <property type="evidence" value="ECO:0007669"/>
    <property type="project" value="UniProtKB-KW"/>
</dbReference>
<dbReference type="GO" id="GO:0003724">
    <property type="term" value="F:RNA helicase activity"/>
    <property type="evidence" value="ECO:0007669"/>
    <property type="project" value="UniProtKB-EC"/>
</dbReference>
<dbReference type="GO" id="GO:0003743">
    <property type="term" value="F:translation initiation factor activity"/>
    <property type="evidence" value="ECO:0007669"/>
    <property type="project" value="UniProtKB-KW"/>
</dbReference>
<dbReference type="CDD" id="cd17939">
    <property type="entry name" value="DEADc_EIF4A"/>
    <property type="match status" value="1"/>
</dbReference>
<dbReference type="CDD" id="cd18787">
    <property type="entry name" value="SF2_C_DEAD"/>
    <property type="match status" value="1"/>
</dbReference>
<dbReference type="FunFam" id="3.40.50.300:FF:000089">
    <property type="entry name" value="Eukaryotic initiation factor 4A-II"/>
    <property type="match status" value="1"/>
</dbReference>
<dbReference type="FunFam" id="3.40.50.300:FF:000031">
    <property type="entry name" value="Eukaryotic initiation factor 4A-III"/>
    <property type="match status" value="1"/>
</dbReference>
<dbReference type="Gene3D" id="3.40.50.300">
    <property type="entry name" value="P-loop containing nucleotide triphosphate hydrolases"/>
    <property type="match status" value="2"/>
</dbReference>
<dbReference type="InterPro" id="IPR011545">
    <property type="entry name" value="DEAD/DEAH_box_helicase_dom"/>
</dbReference>
<dbReference type="InterPro" id="IPR014001">
    <property type="entry name" value="Helicase_ATP-bd"/>
</dbReference>
<dbReference type="InterPro" id="IPR001650">
    <property type="entry name" value="Helicase_C-like"/>
</dbReference>
<dbReference type="InterPro" id="IPR027417">
    <property type="entry name" value="P-loop_NTPase"/>
</dbReference>
<dbReference type="InterPro" id="IPR000629">
    <property type="entry name" value="RNA-helicase_DEAD-box_CS"/>
</dbReference>
<dbReference type="InterPro" id="IPR014014">
    <property type="entry name" value="RNA_helicase_DEAD_Q_motif"/>
</dbReference>
<dbReference type="PANTHER" id="PTHR47958">
    <property type="entry name" value="ATP-DEPENDENT RNA HELICASE DBP3"/>
    <property type="match status" value="1"/>
</dbReference>
<dbReference type="Pfam" id="PF00270">
    <property type="entry name" value="DEAD"/>
    <property type="match status" value="1"/>
</dbReference>
<dbReference type="Pfam" id="PF00271">
    <property type="entry name" value="Helicase_C"/>
    <property type="match status" value="1"/>
</dbReference>
<dbReference type="SMART" id="SM00487">
    <property type="entry name" value="DEXDc"/>
    <property type="match status" value="1"/>
</dbReference>
<dbReference type="SMART" id="SM00490">
    <property type="entry name" value="HELICc"/>
    <property type="match status" value="1"/>
</dbReference>
<dbReference type="SUPFAM" id="SSF52540">
    <property type="entry name" value="P-loop containing nucleoside triphosphate hydrolases"/>
    <property type="match status" value="1"/>
</dbReference>
<dbReference type="PROSITE" id="PS00039">
    <property type="entry name" value="DEAD_ATP_HELICASE"/>
    <property type="match status" value="1"/>
</dbReference>
<dbReference type="PROSITE" id="PS51192">
    <property type="entry name" value="HELICASE_ATP_BIND_1"/>
    <property type="match status" value="1"/>
</dbReference>
<dbReference type="PROSITE" id="PS51194">
    <property type="entry name" value="HELICASE_CTER"/>
    <property type="match status" value="1"/>
</dbReference>
<dbReference type="PROSITE" id="PS51195">
    <property type="entry name" value="Q_MOTIF"/>
    <property type="match status" value="1"/>
</dbReference>
<name>IF4A1_ARATH</name>
<protein>
    <recommendedName>
        <fullName evidence="10 12">Eukaryotic initiation factor 4A-1</fullName>
        <shortName evidence="10 12">eIF-4A-1</shortName>
        <ecNumber evidence="1">3.6.4.13</ecNumber>
    </recommendedName>
    <alternativeName>
        <fullName evidence="10 12">ATP-dependent RNA helicase eIF4A-1</fullName>
    </alternativeName>
    <alternativeName>
        <fullName evidence="11">DEAD-box ATP-dependent RNA helicase 4</fullName>
        <shortName evidence="11">AtRH04</shortName>
    </alternativeName>
</protein>
<sequence>MAGSAPEGTQFDARQFDQKLNEVLEGQDEFFTSYDDVHESFDAMGLQENLLRGIYAYGFEKPSAIQQRGIVPFCKGLDVIQQAQSGTGKTATFCSGVLQQLDFSLIQCQALVLAPTRELAQQIEKVMRALGDYLGVKVHACVGGTSVREDQRILQAGVHVVVGTPGRVFDMLKRQSLRADNIKMFVLDEADEMLSRGFKDQIYDIFQLLPPKIQVGVFSATMPPEALEITRKFMSKPVRILVKRDELTLEGIKQFYVNVEKEEWKLETLCDLYETLAITQSVIFVNTRRKVDWLTDKMRSRDHTVSATHGDMDQNTRDIIMREFRSGSSRVLITTDLLARGIDVQQVSLVINFDLPTQPENYLHRIGRSGRFGRKGVAINFVTRDDERMLFDIQKFYNVVVEELPSNVADLL</sequence>
<accession>P41376</accession>
<accession>Q0WWD9</accession>
<accession>Q546P0</accession>
<accession>Q8LBZ6</accession>
<accession>Q8RXF3</accession>
<accession>Q94CM1</accession>
<proteinExistence type="evidence at protein level"/>
<organism>
    <name type="scientific">Arabidopsis thaliana</name>
    <name type="common">Mouse-ear cress</name>
    <dbReference type="NCBI Taxonomy" id="3702"/>
    <lineage>
        <taxon>Eukaryota</taxon>
        <taxon>Viridiplantae</taxon>
        <taxon>Streptophyta</taxon>
        <taxon>Embryophyta</taxon>
        <taxon>Tracheophyta</taxon>
        <taxon>Spermatophyta</taxon>
        <taxon>Magnoliopsida</taxon>
        <taxon>eudicotyledons</taxon>
        <taxon>Gunneridae</taxon>
        <taxon>Pentapetalae</taxon>
        <taxon>rosids</taxon>
        <taxon>malvids</taxon>
        <taxon>Brassicales</taxon>
        <taxon>Brassicaceae</taxon>
        <taxon>Camelineae</taxon>
        <taxon>Arabidopsis</taxon>
    </lineage>
</organism>
<reference key="1">
    <citation type="journal article" date="1992" name="Gene">
        <title>Sequences for two cDNAs encoding Arabidopsis thaliana eukaryotic protein synthesis initiation factor 4A.</title>
        <authorList>
            <person name="Metz A.M."/>
            <person name="Timmer R.T."/>
            <person name="Browning K.S."/>
        </authorList>
    </citation>
    <scope>NUCLEOTIDE SEQUENCE [MRNA]</scope>
</reference>
<reference key="2">
    <citation type="journal article" date="2001" name="Plant Sci.">
        <title>T-DNA tagging of the translation initiation factor eIF-4A1 from Arabidopsis thaliana.</title>
        <authorList>
            <person name="De Greve H."/>
            <person name="Nguyen V."/>
            <person name="Deboeck F."/>
            <person name="Thia-Toong L."/>
            <person name="Karimi M."/>
            <person name="Hernalsteens J.P."/>
        </authorList>
    </citation>
    <scope>NUCLEOTIDE SEQUENCE [GENOMIC DNA / MRNA]</scope>
    <source>
        <strain>cv. C24</strain>
    </source>
</reference>
<reference key="3">
    <citation type="journal article" date="2000" name="DNA Res.">
        <title>Structural analysis of Arabidopsis thaliana chromosome 3. I. Sequence features of the regions of 4,504,864 bp covered by sixty P1 and TAC clones.</title>
        <authorList>
            <person name="Sato S."/>
            <person name="Nakamura Y."/>
            <person name="Kaneko T."/>
            <person name="Katoh T."/>
            <person name="Asamizu E."/>
            <person name="Tabata S."/>
        </authorList>
    </citation>
    <scope>NUCLEOTIDE SEQUENCE [LARGE SCALE GENOMIC DNA]</scope>
    <source>
        <strain>cv. Columbia</strain>
    </source>
</reference>
<reference key="4">
    <citation type="journal article" date="2017" name="Plant J.">
        <title>Araport11: a complete reannotation of the Arabidopsis thaliana reference genome.</title>
        <authorList>
            <person name="Cheng C.Y."/>
            <person name="Krishnakumar V."/>
            <person name="Chan A.P."/>
            <person name="Thibaud-Nissen F."/>
            <person name="Schobel S."/>
            <person name="Town C.D."/>
        </authorList>
    </citation>
    <scope>GENOME REANNOTATION</scope>
    <source>
        <strain>cv. Columbia</strain>
    </source>
</reference>
<reference key="5">
    <citation type="journal article" date="2003" name="Science">
        <title>Empirical analysis of transcriptional activity in the Arabidopsis genome.</title>
        <authorList>
            <person name="Yamada K."/>
            <person name="Lim J."/>
            <person name="Dale J.M."/>
            <person name="Chen H."/>
            <person name="Shinn P."/>
            <person name="Palm C.J."/>
            <person name="Southwick A.M."/>
            <person name="Wu H.C."/>
            <person name="Kim C.J."/>
            <person name="Nguyen M."/>
            <person name="Pham P.K."/>
            <person name="Cheuk R.F."/>
            <person name="Karlin-Newmann G."/>
            <person name="Liu S.X."/>
            <person name="Lam B."/>
            <person name="Sakano H."/>
            <person name="Wu T."/>
            <person name="Yu G."/>
            <person name="Miranda M."/>
            <person name="Quach H.L."/>
            <person name="Tripp M."/>
            <person name="Chang C.H."/>
            <person name="Lee J.M."/>
            <person name="Toriumi M.J."/>
            <person name="Chan M.M."/>
            <person name="Tang C.C."/>
            <person name="Onodera C.S."/>
            <person name="Deng J.M."/>
            <person name="Akiyama K."/>
            <person name="Ansari Y."/>
            <person name="Arakawa T."/>
            <person name="Banh J."/>
            <person name="Banno F."/>
            <person name="Bowser L."/>
            <person name="Brooks S.Y."/>
            <person name="Carninci P."/>
            <person name="Chao Q."/>
            <person name="Choy N."/>
            <person name="Enju A."/>
            <person name="Goldsmith A.D."/>
            <person name="Gurjal M."/>
            <person name="Hansen N.F."/>
            <person name="Hayashizaki Y."/>
            <person name="Johnson-Hopson C."/>
            <person name="Hsuan V.W."/>
            <person name="Iida K."/>
            <person name="Karnes M."/>
            <person name="Khan S."/>
            <person name="Koesema E."/>
            <person name="Ishida J."/>
            <person name="Jiang P.X."/>
            <person name="Jones T."/>
            <person name="Kawai J."/>
            <person name="Kamiya A."/>
            <person name="Meyers C."/>
            <person name="Nakajima M."/>
            <person name="Narusaka M."/>
            <person name="Seki M."/>
            <person name="Sakurai T."/>
            <person name="Satou M."/>
            <person name="Tamse R."/>
            <person name="Vaysberg M."/>
            <person name="Wallender E.K."/>
            <person name="Wong C."/>
            <person name="Yamamura Y."/>
            <person name="Yuan S."/>
            <person name="Shinozaki K."/>
            <person name="Davis R.W."/>
            <person name="Theologis A."/>
            <person name="Ecker J.R."/>
        </authorList>
    </citation>
    <scope>NUCLEOTIDE SEQUENCE [LARGE SCALE MRNA]</scope>
    <source>
        <strain>cv. Columbia</strain>
    </source>
</reference>
<reference key="6">
    <citation type="submission" date="2006-07" db="EMBL/GenBank/DDBJ databases">
        <title>Large-scale analysis of RIKEN Arabidopsis full-length (RAFL) cDNAs.</title>
        <authorList>
            <person name="Totoki Y."/>
            <person name="Seki M."/>
            <person name="Ishida J."/>
            <person name="Nakajima M."/>
            <person name="Enju A."/>
            <person name="Kamiya A."/>
            <person name="Narusaka M."/>
            <person name="Shin-i T."/>
            <person name="Nakagawa M."/>
            <person name="Sakamoto N."/>
            <person name="Oishi K."/>
            <person name="Kohara Y."/>
            <person name="Kobayashi M."/>
            <person name="Toyoda A."/>
            <person name="Sakaki Y."/>
            <person name="Sakurai T."/>
            <person name="Iida K."/>
            <person name="Akiyama K."/>
            <person name="Satou M."/>
            <person name="Toyoda T."/>
            <person name="Konagaya A."/>
            <person name="Carninci P."/>
            <person name="Kawai J."/>
            <person name="Hayashizaki Y."/>
            <person name="Shinozaki K."/>
        </authorList>
    </citation>
    <scope>NUCLEOTIDE SEQUENCE [LARGE SCALE MRNA]</scope>
    <source>
        <strain>cv. Columbia</strain>
    </source>
</reference>
<reference key="7">
    <citation type="submission" date="2002-03" db="EMBL/GenBank/DDBJ databases">
        <title>Full-length cDNA from Arabidopsis thaliana.</title>
        <authorList>
            <person name="Brover V.V."/>
            <person name="Troukhan M.E."/>
            <person name="Alexandrov N.A."/>
            <person name="Lu Y.-P."/>
            <person name="Flavell R.B."/>
            <person name="Feldmann K.A."/>
        </authorList>
    </citation>
    <scope>NUCLEOTIDE SEQUENCE [LARGE SCALE MRNA]</scope>
</reference>
<reference key="8">
    <citation type="journal article" date="2004" name="FEBS Lett.">
        <title>In vivo interaction between CDKA and eIF4A: a possible mechanism linking translation and cell proliferation.</title>
        <authorList>
            <person name="Hutchins A.P."/>
            <person name="Roberts G.R."/>
            <person name="Lloyd C.W."/>
            <person name="Doonan J.H."/>
        </authorList>
    </citation>
    <scope>INTERACTION WITH CDKA-1</scope>
</reference>
<reference key="9">
    <citation type="journal article" date="2004" name="Plant Biotechnol. J.">
        <title>DEAD-box RNA helicases in Arabidopsis thaliana: establishing a link between quantitative expression, gene structure and evolution of a family of genes.</title>
        <authorList>
            <person name="Mingam A."/>
            <person name="Toffano-Nioche C."/>
            <person name="Brunaud V."/>
            <person name="Boudet N."/>
            <person name="Kreis M."/>
            <person name="Lecharny A."/>
        </authorList>
    </citation>
    <scope>GENE FAMILY</scope>
    <scope>NOMENCLATURE</scope>
    <scope>TISSUE SPECIFICITY</scope>
</reference>
<reference key="10">
    <citation type="journal article" date="2012" name="Mol. Cell. Proteomics">
        <title>Comparative large-scale characterisation of plant vs. mammal proteins reveals similar and idiosyncratic N-alpha acetylation features.</title>
        <authorList>
            <person name="Bienvenut W.V."/>
            <person name="Sumpton D."/>
            <person name="Martinez A."/>
            <person name="Lilla S."/>
            <person name="Espagne C."/>
            <person name="Meinnel T."/>
            <person name="Giglione C."/>
        </authorList>
    </citation>
    <scope>ACETYLATION [LARGE SCALE ANALYSIS] AT ALA-2</scope>
    <scope>CLEAVAGE OF INITIATOR METHIONINE [LARGE SCALE ANALYSIS]</scope>
    <scope>IDENTIFICATION BY MASS SPECTROMETRY [LARGE SCALE ANALYSIS]</scope>
</reference>
<reference key="11">
    <citation type="journal article" date="2013" name="PLoS ONE">
        <title>Genome-wide comparative in silico analysis of the RNA helicase gene family in Zea mays and Glycine max: a comparison with Arabidopsis and Oryza sativa.</title>
        <authorList>
            <person name="Xu R."/>
            <person name="Zhang S."/>
            <person name="Huang J."/>
            <person name="Zheng C."/>
        </authorList>
    </citation>
    <scope>GENE FAMILY</scope>
</reference>
<reference key="12">
    <citation type="journal article" date="2017" name="Plant Cell">
        <title>MRF family genes are involved in translation control, especially under energy-deficient conditions, and their expression and functions are modulated by the TOR signaling pathway.</title>
        <authorList>
            <person name="Lee D.-H."/>
            <person name="Park S.J."/>
            <person name="Ahn C.S."/>
            <person name="Pai H.-S."/>
        </authorList>
    </citation>
    <scope>INTERACTION WITH MRF1; MRF2; MRF3/ECIP1 AND MRF4</scope>
    <source>
        <strain>cv. Columbia</strain>
    </source>
</reference>
<keyword id="KW-0007">Acetylation</keyword>
<keyword id="KW-0025">Alternative splicing</keyword>
<keyword id="KW-0067">ATP-binding</keyword>
<keyword id="KW-0963">Cytoplasm</keyword>
<keyword id="KW-0347">Helicase</keyword>
<keyword id="KW-0378">Hydrolase</keyword>
<keyword id="KW-0396">Initiation factor</keyword>
<keyword id="KW-0547">Nucleotide-binding</keyword>
<keyword id="KW-0597">Phosphoprotein</keyword>
<keyword id="KW-0648">Protein biosynthesis</keyword>
<keyword id="KW-1185">Reference proteome</keyword>
<keyword id="KW-0694">RNA-binding</keyword>
<gene>
    <name evidence="10 12" type="primary">EIF4A1</name>
    <name evidence="11" type="synonym">RH4</name>
    <name type="synonym">TIF4A-1</name>
    <name evidence="14" type="ordered locus">At3g13920</name>
    <name evidence="15" type="ORF">MDC16.4</name>
</gene>
<feature type="initiator methionine" description="Removed" evidence="16">
    <location>
        <position position="1"/>
    </location>
</feature>
<feature type="chain" id="PRO_0000054949" description="Eukaryotic initiation factor 4A-1">
    <location>
        <begin position="2"/>
        <end position="412"/>
    </location>
</feature>
<feature type="domain" description="Helicase ATP-binding" evidence="5">
    <location>
        <begin position="70"/>
        <end position="240"/>
    </location>
</feature>
<feature type="domain" description="Helicase C-terminal" evidence="6">
    <location>
        <begin position="251"/>
        <end position="412"/>
    </location>
</feature>
<feature type="short sequence motif" description="Q motif">
    <location>
        <begin position="39"/>
        <end position="67"/>
    </location>
</feature>
<feature type="short sequence motif" description="DEAD box">
    <location>
        <begin position="188"/>
        <end position="191"/>
    </location>
</feature>
<feature type="binding site" evidence="5">
    <location>
        <begin position="83"/>
        <end position="90"/>
    </location>
    <ligand>
        <name>ATP</name>
        <dbReference type="ChEBI" id="CHEBI:30616"/>
    </ligand>
</feature>
<feature type="modified residue" description="N-acetylalanine" evidence="16">
    <location>
        <position position="2"/>
    </location>
</feature>
<feature type="modified residue" description="Phosphoserine" evidence="3">
    <location>
        <position position="104"/>
    </location>
</feature>
<feature type="modified residue" description="Phosphothreonine" evidence="4">
    <location>
        <position position="145"/>
    </location>
</feature>
<feature type="sequence conflict" description="In Ref. 6; BAE98559." evidence="13" ref="6">
    <original>A</original>
    <variation>T</variation>
    <location>
        <position position="91"/>
    </location>
</feature>
<feature type="sequence conflict" description="In Ref. 6; BAE98559." evidence="13" ref="6">
    <original>G</original>
    <variation>S</variation>
    <location>
        <position position="157"/>
    </location>
</feature>
<feature type="sequence conflict" description="In Ref. 5; AAL91176." evidence="13" ref="5">
    <original>L</original>
    <variation>V</variation>
    <location>
        <position position="249"/>
    </location>
</feature>